<sequence>MATLSLPLPHLTQAIPARARPRPRPLRGIPARLLSCRAAMAVAPDKEEAAAVALDKAVKVAVAAPDRAAVAAVGVGEELPEGYDQMMPAVEEARRRRAGVLLHPTSLRGPHGIGDLGDEAVAFLAWLRDAGCTLWQVLPLVPPGRKSGEDGSPYSGQDANCGNTLLISLEELVKDGLLMENELPDPLDMEYVEFDTVANLKEPLIAKAAERLLLSRGELRTQYDCFKKNPNISGWLEDAALFAAIDRSIDALSWYEWPEPLKNRHLRALEDIYQKQKDFIEIFMAQQFLFQRQWQRIRKYAKKLGISIMGDMPIYVGYHSADVWANRKSFLLDKNGFPTFVSGVPPDAFSETGQLWNSPLYDWKAMEAGGFEWWIKRINRALDLYDEFRIDHFRGLAGFWAVPSESKVALVGSWRAGPRNAFFDALFKAVGRINIIAEDLGVITEDVVDLRKSIEAPGMAVLQFAFGGGSDNPHLPHNHEFDQVVYTGTHDNDTVIGWWQTLPEEEKQTVFKYLPEANRTEISWALITAALSSVARTSMVTMQDILGLDSSARMNTPATQKGNWRWRMPSSVSFDSLSPEAAKLKELLGLYNRL</sequence>
<protein>
    <recommendedName>
        <fullName>4-alpha-glucanotransferase DPE1, chloroplastic/amyloplastic</fullName>
        <ecNumber>2.4.1.25</ecNumber>
    </recommendedName>
    <alternativeName>
        <fullName>Amylomaltase</fullName>
    </alternativeName>
    <alternativeName>
        <fullName>Disproportionating enzyme</fullName>
        <shortName>D-enzyme</shortName>
    </alternativeName>
    <alternativeName>
        <fullName>Protein DISPROPORTIONATING ENZYME 1</fullName>
    </alternativeName>
</protein>
<dbReference type="EC" id="2.4.1.25"/>
<dbReference type="EMBL" id="AP004009">
    <property type="protein sequence ID" value="BAC07076.1"/>
    <property type="status" value="ALT_SEQ"/>
    <property type="molecule type" value="Genomic_DNA"/>
</dbReference>
<dbReference type="EMBL" id="AP004306">
    <property type="protein sequence ID" value="BAC22337.1"/>
    <property type="status" value="ALT_SEQ"/>
    <property type="molecule type" value="Genomic_DNA"/>
</dbReference>
<dbReference type="EMBL" id="AP008213">
    <property type="protein sequence ID" value="BAF22256.2"/>
    <property type="status" value="ALT_SEQ"/>
    <property type="molecule type" value="Genomic_DNA"/>
</dbReference>
<dbReference type="EMBL" id="AP014963">
    <property type="protein sequence ID" value="BAT02744.1"/>
    <property type="molecule type" value="Genomic_DNA"/>
</dbReference>
<dbReference type="EMBL" id="AK318541">
    <property type="status" value="NOT_ANNOTATED_CDS"/>
    <property type="molecule type" value="mRNA"/>
</dbReference>
<dbReference type="RefSeq" id="XP_015645120.1">
    <property type="nucleotide sequence ID" value="XM_015789634.1"/>
</dbReference>
<dbReference type="SMR" id="Q8LI30"/>
<dbReference type="FunCoup" id="Q8LI30">
    <property type="interactions" value="322"/>
</dbReference>
<dbReference type="STRING" id="39947.Q8LI30"/>
<dbReference type="CAZy" id="GH77">
    <property type="family name" value="Glycoside Hydrolase Family 77"/>
</dbReference>
<dbReference type="PaxDb" id="39947-Q8LI30"/>
<dbReference type="EnsemblPlants" id="Os07t0627000-01">
    <property type="protein sequence ID" value="Os07t0627000-01"/>
    <property type="gene ID" value="Os07g0627000"/>
</dbReference>
<dbReference type="Gramene" id="Os07t0627000-01">
    <property type="protein sequence ID" value="Os07t0627000-01"/>
    <property type="gene ID" value="Os07g0627000"/>
</dbReference>
<dbReference type="KEGG" id="dosa:Os07g0627000"/>
<dbReference type="eggNOG" id="ENOG502QU40">
    <property type="taxonomic scope" value="Eukaryota"/>
</dbReference>
<dbReference type="HOGENOM" id="CLU_014132_1_0_1"/>
<dbReference type="InParanoid" id="Q8LI30"/>
<dbReference type="OMA" id="SWWIRRI"/>
<dbReference type="OrthoDB" id="6123450at2759"/>
<dbReference type="PlantReactome" id="R-OSA-9626305">
    <property type="pathway name" value="Regulatory network of nutrient accumulation"/>
</dbReference>
<dbReference type="Proteomes" id="UP000000763">
    <property type="component" value="Chromosome 7"/>
</dbReference>
<dbReference type="Proteomes" id="UP000059680">
    <property type="component" value="Chromosome 7"/>
</dbReference>
<dbReference type="ExpressionAtlas" id="Q8LI30">
    <property type="expression patterns" value="baseline and differential"/>
</dbReference>
<dbReference type="GO" id="GO:0009501">
    <property type="term" value="C:amyloplast"/>
    <property type="evidence" value="ECO:0007669"/>
    <property type="project" value="UniProtKB-SubCell"/>
</dbReference>
<dbReference type="GO" id="GO:0009507">
    <property type="term" value="C:chloroplast"/>
    <property type="evidence" value="ECO:0007669"/>
    <property type="project" value="UniProtKB-SubCell"/>
</dbReference>
<dbReference type="GO" id="GO:0004134">
    <property type="term" value="F:4-alpha-glucanotransferase activity"/>
    <property type="evidence" value="ECO:0007669"/>
    <property type="project" value="UniProtKB-EC"/>
</dbReference>
<dbReference type="GO" id="GO:0006006">
    <property type="term" value="P:glucose metabolic process"/>
    <property type="evidence" value="ECO:0007669"/>
    <property type="project" value="EnsemblPlants"/>
</dbReference>
<dbReference type="GO" id="GO:0000025">
    <property type="term" value="P:maltose catabolic process"/>
    <property type="evidence" value="ECO:0007669"/>
    <property type="project" value="EnsemblPlants"/>
</dbReference>
<dbReference type="GO" id="GO:0005983">
    <property type="term" value="P:starch catabolic process"/>
    <property type="evidence" value="ECO:0007669"/>
    <property type="project" value="EnsemblPlants"/>
</dbReference>
<dbReference type="FunFam" id="3.20.20.80:FF:000193">
    <property type="entry name" value="4-alpha-glucanotransferase, chloroplastic/amyloplastic"/>
    <property type="match status" value="1"/>
</dbReference>
<dbReference type="Gene3D" id="3.20.20.80">
    <property type="entry name" value="Glycosidases"/>
    <property type="match status" value="1"/>
</dbReference>
<dbReference type="InterPro" id="IPR003385">
    <property type="entry name" value="Glyco_hydro_77"/>
</dbReference>
<dbReference type="InterPro" id="IPR017853">
    <property type="entry name" value="Glycoside_hydrolase_SF"/>
</dbReference>
<dbReference type="NCBIfam" id="TIGR00217">
    <property type="entry name" value="malQ"/>
    <property type="match status" value="1"/>
</dbReference>
<dbReference type="NCBIfam" id="NF011080">
    <property type="entry name" value="PRK14508.1-3"/>
    <property type="match status" value="1"/>
</dbReference>
<dbReference type="PANTHER" id="PTHR32438">
    <property type="entry name" value="4-ALPHA-GLUCANOTRANSFERASE DPE1, CHLOROPLASTIC/AMYLOPLASTIC"/>
    <property type="match status" value="1"/>
</dbReference>
<dbReference type="PANTHER" id="PTHR32438:SF5">
    <property type="entry name" value="4-ALPHA-GLUCANOTRANSFERASE DPE1, CHLOROPLASTIC_AMYLOPLASTIC"/>
    <property type="match status" value="1"/>
</dbReference>
<dbReference type="Pfam" id="PF02446">
    <property type="entry name" value="Glyco_hydro_77"/>
    <property type="match status" value="1"/>
</dbReference>
<dbReference type="SUPFAM" id="SSF51445">
    <property type="entry name" value="(Trans)glycosidases"/>
    <property type="match status" value="1"/>
</dbReference>
<proteinExistence type="evidence at transcript level"/>
<name>DPE1_ORYSJ</name>
<reference key="1">
    <citation type="journal article" date="2005" name="Nature">
        <title>The map-based sequence of the rice genome.</title>
        <authorList>
            <consortium name="International rice genome sequencing project (IRGSP)"/>
        </authorList>
    </citation>
    <scope>NUCLEOTIDE SEQUENCE [LARGE SCALE GENOMIC DNA]</scope>
    <source>
        <strain>cv. Nipponbare</strain>
    </source>
</reference>
<reference key="2">
    <citation type="journal article" date="2008" name="Nucleic Acids Res.">
        <title>The rice annotation project database (RAP-DB): 2008 update.</title>
        <authorList>
            <consortium name="The rice annotation project (RAP)"/>
        </authorList>
    </citation>
    <scope>GENOME REANNOTATION</scope>
    <source>
        <strain>cv. Nipponbare</strain>
    </source>
</reference>
<reference key="3">
    <citation type="journal article" date="2013" name="Rice">
        <title>Improvement of the Oryza sativa Nipponbare reference genome using next generation sequence and optical map data.</title>
        <authorList>
            <person name="Kawahara Y."/>
            <person name="de la Bastide M."/>
            <person name="Hamilton J.P."/>
            <person name="Kanamori H."/>
            <person name="McCombie W.R."/>
            <person name="Ouyang S."/>
            <person name="Schwartz D.C."/>
            <person name="Tanaka T."/>
            <person name="Wu J."/>
            <person name="Zhou S."/>
            <person name="Childs K.L."/>
            <person name="Davidson R.M."/>
            <person name="Lin H."/>
            <person name="Quesada-Ocampo L."/>
            <person name="Vaillancourt B."/>
            <person name="Sakai H."/>
            <person name="Lee S.S."/>
            <person name="Kim J."/>
            <person name="Numa H."/>
            <person name="Itoh T."/>
            <person name="Buell C.R."/>
            <person name="Matsumoto T."/>
        </authorList>
    </citation>
    <scope>GENOME REANNOTATION</scope>
    <source>
        <strain>cv. Nipponbare</strain>
    </source>
</reference>
<reference key="4">
    <citation type="submission" date="2008-11" db="EMBL/GenBank/DDBJ databases">
        <title>Oryza sativa full length cDNA.</title>
        <authorList>
            <consortium name="The rice full-length cDNA consortium"/>
        </authorList>
    </citation>
    <scope>NUCLEOTIDE SEQUENCE [LARGE SCALE MRNA]</scope>
    <source>
        <strain>cv. Nipponbare</strain>
    </source>
</reference>
<keyword id="KW-0035">Amyloplast</keyword>
<keyword id="KW-0119">Carbohydrate metabolism</keyword>
<keyword id="KW-0150">Chloroplast</keyword>
<keyword id="KW-0328">Glycosyltransferase</keyword>
<keyword id="KW-0934">Plastid</keyword>
<keyword id="KW-1185">Reference proteome</keyword>
<keyword id="KW-0808">Transferase</keyword>
<keyword id="KW-0809">Transit peptide</keyword>
<evidence type="ECO:0000250" key="1"/>
<evidence type="ECO:0000255" key="2"/>
<evidence type="ECO:0000305" key="3"/>
<feature type="transit peptide" description="Chloroplast" evidence="2">
    <location>
        <begin position="1"/>
        <end position="37"/>
    </location>
</feature>
<feature type="chain" id="PRO_0000407920" description="4-alpha-glucanotransferase DPE1, chloroplastic/amyloplastic">
    <location>
        <begin position="38"/>
        <end position="594"/>
    </location>
</feature>
<comment type="function">
    <text evidence="1">Chloroplastic alpha-glucanotransferase involved in maltotriose metabolism.</text>
</comment>
<comment type="catalytic activity">
    <reaction>
        <text>Transfers a segment of a (1-&gt;4)-alpha-D-glucan to a new position in an acceptor, which may be glucose or a (1-&gt;4)-alpha-D-glucan.</text>
        <dbReference type="EC" id="2.4.1.25"/>
    </reaction>
</comment>
<comment type="subcellular location">
    <subcellularLocation>
        <location>Plastid</location>
        <location>Chloroplast</location>
    </subcellularLocation>
    <subcellularLocation>
        <location evidence="3">Plastid</location>
        <location evidence="3">Amyloplast</location>
    </subcellularLocation>
</comment>
<comment type="similarity">
    <text evidence="3">Belongs to the disproportionating enzyme family.</text>
</comment>
<comment type="sequence caution" evidence="3">
    <conflict type="erroneous gene model prediction">
        <sequence resource="EMBL-CDS" id="BAC07076"/>
    </conflict>
</comment>
<comment type="sequence caution" evidence="3">
    <conflict type="erroneous gene model prediction">
        <sequence resource="EMBL-CDS" id="BAC22337"/>
    </conflict>
</comment>
<comment type="sequence caution" evidence="3">
    <conflict type="erroneous gene model prediction">
        <sequence resource="EMBL-CDS" id="BAF22256"/>
    </conflict>
</comment>
<organism>
    <name type="scientific">Oryza sativa subsp. japonica</name>
    <name type="common">Rice</name>
    <dbReference type="NCBI Taxonomy" id="39947"/>
    <lineage>
        <taxon>Eukaryota</taxon>
        <taxon>Viridiplantae</taxon>
        <taxon>Streptophyta</taxon>
        <taxon>Embryophyta</taxon>
        <taxon>Tracheophyta</taxon>
        <taxon>Spermatophyta</taxon>
        <taxon>Magnoliopsida</taxon>
        <taxon>Liliopsida</taxon>
        <taxon>Poales</taxon>
        <taxon>Poaceae</taxon>
        <taxon>BOP clade</taxon>
        <taxon>Oryzoideae</taxon>
        <taxon>Oryzeae</taxon>
        <taxon>Oryzinae</taxon>
        <taxon>Oryza</taxon>
        <taxon>Oryza sativa</taxon>
    </lineage>
</organism>
<accession>Q8LI30</accession>
<accession>Q0D4G7</accession>
<gene>
    <name type="primary">DPE1</name>
    <name type="ordered locus">Os07g0627000</name>
    <name type="ordered locus">LOC_Os07g43390</name>
    <name type="ORF">OJ1339_F05.134</name>
    <name type="ORF">P0506F02.102</name>
</gene>